<sequence length="246" mass="26383">MAGHSKWANIKHRKAAQDAQRGKIFTKLIRELVTAAKIGGGDVSANPRLRAAVDKALSNNMTRDTINRAIDRGVGGGDDTNMETKIYEGYGPGGTAVMVECLSDNANRTISQVRPSFTKCGGNLGTEGSVGYLFSKKGLILIAEADEDALTEAAIEAGADDIQPQDDGSFEIYTAWEDLGSVRDGIEAAGFKVQEAEVTMIPSTTVDLDIETAPKLLRLIDMLEDCDDVQNVYHNGEICDEVASQL</sequence>
<keyword id="KW-0963">Cytoplasm</keyword>
<keyword id="KW-0238">DNA-binding</keyword>
<keyword id="KW-0804">Transcription</keyword>
<keyword id="KW-0805">Transcription regulation</keyword>
<name>Y1480_HAEIE</name>
<reference key="1">
    <citation type="journal article" date="2007" name="Genome Biol.">
        <title>Characterization and modeling of the Haemophilus influenzae core and supragenomes based on the complete genomic sequences of Rd and 12 clinical nontypeable strains.</title>
        <authorList>
            <person name="Hogg J.S."/>
            <person name="Hu F.Z."/>
            <person name="Janto B."/>
            <person name="Boissy R."/>
            <person name="Hayes J."/>
            <person name="Keefe R."/>
            <person name="Post J.C."/>
            <person name="Ehrlich G.D."/>
        </authorList>
    </citation>
    <scope>NUCLEOTIDE SEQUENCE [LARGE SCALE GENOMIC DNA]</scope>
    <source>
        <strain>PittEE</strain>
    </source>
</reference>
<organism>
    <name type="scientific">Haemophilus influenzae (strain PittEE)</name>
    <dbReference type="NCBI Taxonomy" id="374930"/>
    <lineage>
        <taxon>Bacteria</taxon>
        <taxon>Pseudomonadati</taxon>
        <taxon>Pseudomonadota</taxon>
        <taxon>Gammaproteobacteria</taxon>
        <taxon>Pasteurellales</taxon>
        <taxon>Pasteurellaceae</taxon>
        <taxon>Haemophilus</taxon>
    </lineage>
</organism>
<feature type="chain" id="PRO_1000045315" description="Probable transcriptional regulatory protein CGSHiEE_01480">
    <location>
        <begin position="1"/>
        <end position="246"/>
    </location>
</feature>
<protein>
    <recommendedName>
        <fullName evidence="1">Probable transcriptional regulatory protein CGSHiEE_01480</fullName>
    </recommendedName>
</protein>
<gene>
    <name type="ordered locus">CGSHiEE_01480</name>
</gene>
<dbReference type="EMBL" id="CP000671">
    <property type="protein sequence ID" value="ABQ97776.1"/>
    <property type="molecule type" value="Genomic_DNA"/>
</dbReference>
<dbReference type="SMR" id="A5UAH5"/>
<dbReference type="KEGG" id="hip:CGSHiEE_01480"/>
<dbReference type="HOGENOM" id="CLU_062974_2_2_6"/>
<dbReference type="GO" id="GO:0005829">
    <property type="term" value="C:cytosol"/>
    <property type="evidence" value="ECO:0007669"/>
    <property type="project" value="TreeGrafter"/>
</dbReference>
<dbReference type="GO" id="GO:0003677">
    <property type="term" value="F:DNA binding"/>
    <property type="evidence" value="ECO:0007669"/>
    <property type="project" value="UniProtKB-UniRule"/>
</dbReference>
<dbReference type="GO" id="GO:0006355">
    <property type="term" value="P:regulation of DNA-templated transcription"/>
    <property type="evidence" value="ECO:0007669"/>
    <property type="project" value="UniProtKB-UniRule"/>
</dbReference>
<dbReference type="FunFam" id="1.10.10.200:FF:000001">
    <property type="entry name" value="Probable transcriptional regulatory protein YebC"/>
    <property type="match status" value="1"/>
</dbReference>
<dbReference type="FunFam" id="3.30.70.980:FF:000002">
    <property type="entry name" value="Probable transcriptional regulatory protein YebC"/>
    <property type="match status" value="1"/>
</dbReference>
<dbReference type="Gene3D" id="1.10.10.200">
    <property type="match status" value="1"/>
</dbReference>
<dbReference type="Gene3D" id="3.30.70.980">
    <property type="match status" value="2"/>
</dbReference>
<dbReference type="HAMAP" id="MF_00693">
    <property type="entry name" value="Transcrip_reg_TACO1"/>
    <property type="match status" value="1"/>
</dbReference>
<dbReference type="InterPro" id="IPR017856">
    <property type="entry name" value="Integrase-like_N"/>
</dbReference>
<dbReference type="InterPro" id="IPR048300">
    <property type="entry name" value="TACO1_YebC-like_2nd/3rd_dom"/>
</dbReference>
<dbReference type="InterPro" id="IPR049083">
    <property type="entry name" value="TACO1_YebC_N"/>
</dbReference>
<dbReference type="InterPro" id="IPR002876">
    <property type="entry name" value="Transcrip_reg_TACO1-like"/>
</dbReference>
<dbReference type="InterPro" id="IPR026564">
    <property type="entry name" value="Transcrip_reg_TACO1-like_dom3"/>
</dbReference>
<dbReference type="InterPro" id="IPR029072">
    <property type="entry name" value="YebC-like"/>
</dbReference>
<dbReference type="NCBIfam" id="NF001030">
    <property type="entry name" value="PRK00110.1"/>
    <property type="match status" value="1"/>
</dbReference>
<dbReference type="NCBIfam" id="NF009044">
    <property type="entry name" value="PRK12378.1"/>
    <property type="match status" value="1"/>
</dbReference>
<dbReference type="NCBIfam" id="TIGR01033">
    <property type="entry name" value="YebC/PmpR family DNA-binding transcriptional regulator"/>
    <property type="match status" value="1"/>
</dbReference>
<dbReference type="PANTHER" id="PTHR12532:SF6">
    <property type="entry name" value="TRANSCRIPTIONAL REGULATORY PROTEIN YEBC-RELATED"/>
    <property type="match status" value="1"/>
</dbReference>
<dbReference type="PANTHER" id="PTHR12532">
    <property type="entry name" value="TRANSLATIONAL ACTIVATOR OF CYTOCHROME C OXIDASE 1"/>
    <property type="match status" value="1"/>
</dbReference>
<dbReference type="Pfam" id="PF20772">
    <property type="entry name" value="TACO1_YebC_N"/>
    <property type="match status" value="1"/>
</dbReference>
<dbReference type="Pfam" id="PF01709">
    <property type="entry name" value="Transcrip_reg"/>
    <property type="match status" value="1"/>
</dbReference>
<dbReference type="SUPFAM" id="SSF75625">
    <property type="entry name" value="YebC-like"/>
    <property type="match status" value="1"/>
</dbReference>
<proteinExistence type="inferred from homology"/>
<evidence type="ECO:0000255" key="1">
    <source>
        <dbReference type="HAMAP-Rule" id="MF_00693"/>
    </source>
</evidence>
<comment type="subcellular location">
    <subcellularLocation>
        <location evidence="1">Cytoplasm</location>
    </subcellularLocation>
</comment>
<comment type="similarity">
    <text evidence="1">Belongs to the TACO1 family.</text>
</comment>
<accession>A5UAH5</accession>